<reference key="1">
    <citation type="journal article" date="2005" name="J. Bacteriol.">
        <title>The genome of Sulfolobus acidocaldarius, a model organism of the Crenarchaeota.</title>
        <authorList>
            <person name="Chen L."/>
            <person name="Bruegger K."/>
            <person name="Skovgaard M."/>
            <person name="Redder P."/>
            <person name="She Q."/>
            <person name="Torarinsson E."/>
            <person name="Greve B."/>
            <person name="Awayez M."/>
            <person name="Zibat A."/>
            <person name="Klenk H.-P."/>
            <person name="Garrett R.A."/>
        </authorList>
    </citation>
    <scope>NUCLEOTIDE SEQUENCE [LARGE SCALE GENOMIC DNA]</scope>
    <source>
        <strain>ATCC 33909 / DSM 639 / JCM 8929 / NBRC 15157 / NCIMB 11770</strain>
    </source>
</reference>
<sequence>MKIKLVSYSKDGERIVAIAAKMSRSRKGWDYHEKEMTDDEIETWIRDSITHGYWSVLEHSVYTFSIEGISRVASHQLVRHRIASYTQMSHRFAKPVDKYYKPITPPSIEKRGKEVVDKAYQDAYNYFYQLLEKGVPEEDARYVLPNGVNTNIVVTMNARELYNFFGLRLCSRAQWEIRAIAWKMLDEVKRVHPRLFKYAGPNCIIHENFIRENPITLDDIDNTVFISQRCIEGVTREGIPKCVKNARSILVSEDGVVMGK</sequence>
<evidence type="ECO:0000255" key="1">
    <source>
        <dbReference type="HAMAP-Rule" id="MF_01408"/>
    </source>
</evidence>
<evidence type="ECO:0000255" key="2">
    <source>
        <dbReference type="PROSITE-ProRule" id="PRU00661"/>
    </source>
</evidence>
<proteinExistence type="inferred from homology"/>
<keyword id="KW-0274">FAD</keyword>
<keyword id="KW-0285">Flavoprotein</keyword>
<keyword id="KW-0489">Methyltransferase</keyword>
<keyword id="KW-0521">NADP</keyword>
<keyword id="KW-0545">Nucleotide biosynthesis</keyword>
<keyword id="KW-1185">Reference proteome</keyword>
<keyword id="KW-0808">Transferase</keyword>
<gene>
    <name evidence="1" type="primary">thyX</name>
    <name type="ordered locus">Saci_2347</name>
</gene>
<comment type="function">
    <text evidence="1">Catalyzes the reductive methylation of 2'-deoxyuridine-5'-monophosphate (dUMP) to 2'-deoxythymidine-5'-monophosphate (dTMP) while utilizing 5,10-methylenetetrahydrofolate (mTHF) as the methyl donor, and NADPH and FADH(2) as the reductant.</text>
</comment>
<comment type="catalytic activity">
    <reaction evidence="1">
        <text>dUMP + (6R)-5,10-methylene-5,6,7,8-tetrahydrofolate + NADPH + H(+) = dTMP + (6S)-5,6,7,8-tetrahydrofolate + NADP(+)</text>
        <dbReference type="Rhea" id="RHEA:29043"/>
        <dbReference type="ChEBI" id="CHEBI:15378"/>
        <dbReference type="ChEBI" id="CHEBI:15636"/>
        <dbReference type="ChEBI" id="CHEBI:57453"/>
        <dbReference type="ChEBI" id="CHEBI:57783"/>
        <dbReference type="ChEBI" id="CHEBI:58349"/>
        <dbReference type="ChEBI" id="CHEBI:63528"/>
        <dbReference type="ChEBI" id="CHEBI:246422"/>
        <dbReference type="EC" id="2.1.1.148"/>
    </reaction>
</comment>
<comment type="cofactor">
    <cofactor evidence="1">
        <name>FAD</name>
        <dbReference type="ChEBI" id="CHEBI:57692"/>
    </cofactor>
    <text evidence="1">Binds 4 FAD per tetramer. Each FAD binding site is formed by three monomers.</text>
</comment>
<comment type="pathway">
    <text evidence="1">Pyrimidine metabolism; dTTP biosynthesis.</text>
</comment>
<comment type="subunit">
    <text evidence="1">Homotetramer.</text>
</comment>
<comment type="similarity">
    <text evidence="1">Belongs to the thymidylate synthase ThyX family.</text>
</comment>
<organism>
    <name type="scientific">Sulfolobus acidocaldarius (strain ATCC 33909 / DSM 639 / JCM 8929 / NBRC 15157 / NCIMB 11770)</name>
    <dbReference type="NCBI Taxonomy" id="330779"/>
    <lineage>
        <taxon>Archaea</taxon>
        <taxon>Thermoproteota</taxon>
        <taxon>Thermoprotei</taxon>
        <taxon>Sulfolobales</taxon>
        <taxon>Sulfolobaceae</taxon>
        <taxon>Sulfolobus</taxon>
    </lineage>
</organism>
<accession>Q4J6F2</accession>
<dbReference type="EC" id="2.1.1.148" evidence="1"/>
<dbReference type="EMBL" id="CP000077">
    <property type="protein sequence ID" value="AAY81629.1"/>
    <property type="molecule type" value="Genomic_DNA"/>
</dbReference>
<dbReference type="RefSeq" id="WP_011279131.1">
    <property type="nucleotide sequence ID" value="NC_007181.1"/>
</dbReference>
<dbReference type="SMR" id="Q4J6F2"/>
<dbReference type="STRING" id="330779.Saci_2347"/>
<dbReference type="GeneID" id="14552856"/>
<dbReference type="GeneID" id="78440332"/>
<dbReference type="KEGG" id="sai:Saci_2347"/>
<dbReference type="PATRIC" id="fig|330779.12.peg.2354"/>
<dbReference type="eggNOG" id="arCOG01883">
    <property type="taxonomic scope" value="Archaea"/>
</dbReference>
<dbReference type="HOGENOM" id="CLU_077585_0_0_2"/>
<dbReference type="UniPathway" id="UPA00575"/>
<dbReference type="Proteomes" id="UP000001018">
    <property type="component" value="Chromosome"/>
</dbReference>
<dbReference type="GO" id="GO:0050660">
    <property type="term" value="F:flavin adenine dinucleotide binding"/>
    <property type="evidence" value="ECO:0007669"/>
    <property type="project" value="InterPro"/>
</dbReference>
<dbReference type="GO" id="GO:0070402">
    <property type="term" value="F:NADPH binding"/>
    <property type="evidence" value="ECO:0007669"/>
    <property type="project" value="TreeGrafter"/>
</dbReference>
<dbReference type="GO" id="GO:0050797">
    <property type="term" value="F:thymidylate synthase (FAD) activity"/>
    <property type="evidence" value="ECO:0007669"/>
    <property type="project" value="UniProtKB-UniRule"/>
</dbReference>
<dbReference type="GO" id="GO:0004799">
    <property type="term" value="F:thymidylate synthase activity"/>
    <property type="evidence" value="ECO:0007669"/>
    <property type="project" value="TreeGrafter"/>
</dbReference>
<dbReference type="GO" id="GO:0006231">
    <property type="term" value="P:dTMP biosynthetic process"/>
    <property type="evidence" value="ECO:0007669"/>
    <property type="project" value="UniProtKB-UniRule"/>
</dbReference>
<dbReference type="GO" id="GO:0006235">
    <property type="term" value="P:dTTP biosynthetic process"/>
    <property type="evidence" value="ECO:0007669"/>
    <property type="project" value="UniProtKB-UniRule"/>
</dbReference>
<dbReference type="GO" id="GO:0032259">
    <property type="term" value="P:methylation"/>
    <property type="evidence" value="ECO:0007669"/>
    <property type="project" value="UniProtKB-KW"/>
</dbReference>
<dbReference type="CDD" id="cd20175">
    <property type="entry name" value="ThyX"/>
    <property type="match status" value="1"/>
</dbReference>
<dbReference type="FunFam" id="3.30.1360.170:FF:000004">
    <property type="entry name" value="Flavin-dependent thymidylate synthase"/>
    <property type="match status" value="1"/>
</dbReference>
<dbReference type="Gene3D" id="3.30.1360.170">
    <property type="match status" value="1"/>
</dbReference>
<dbReference type="HAMAP" id="MF_01408">
    <property type="entry name" value="ThyX"/>
    <property type="match status" value="1"/>
</dbReference>
<dbReference type="InterPro" id="IPR003669">
    <property type="entry name" value="Thymidylate_synthase_ThyX"/>
</dbReference>
<dbReference type="InterPro" id="IPR036098">
    <property type="entry name" value="Thymidylate_synthase_ThyX_sf"/>
</dbReference>
<dbReference type="NCBIfam" id="TIGR02170">
    <property type="entry name" value="thyX"/>
    <property type="match status" value="1"/>
</dbReference>
<dbReference type="PANTHER" id="PTHR34934">
    <property type="entry name" value="FLAVIN-DEPENDENT THYMIDYLATE SYNTHASE"/>
    <property type="match status" value="1"/>
</dbReference>
<dbReference type="PANTHER" id="PTHR34934:SF1">
    <property type="entry name" value="FLAVIN-DEPENDENT THYMIDYLATE SYNTHASE"/>
    <property type="match status" value="1"/>
</dbReference>
<dbReference type="Pfam" id="PF02511">
    <property type="entry name" value="Thy1"/>
    <property type="match status" value="1"/>
</dbReference>
<dbReference type="SUPFAM" id="SSF69796">
    <property type="entry name" value="Thymidylate synthase-complementing protein Thy1"/>
    <property type="match status" value="1"/>
</dbReference>
<dbReference type="PROSITE" id="PS51331">
    <property type="entry name" value="THYX"/>
    <property type="match status" value="1"/>
</dbReference>
<feature type="chain" id="PRO_0000175596" description="Flavin-dependent thymidylate synthase">
    <location>
        <begin position="1"/>
        <end position="260"/>
    </location>
</feature>
<feature type="domain" description="ThyX" evidence="2">
    <location>
        <begin position="1"/>
        <end position="202"/>
    </location>
</feature>
<feature type="short sequence motif" description="ThyX motif" evidence="1">
    <location>
        <begin position="79"/>
        <end position="89"/>
    </location>
</feature>
<feature type="active site" description="Involved in ionization of N3 of dUMP, leading to its activation" evidence="1">
    <location>
        <position position="168"/>
    </location>
</feature>
<feature type="binding site" evidence="1">
    <location>
        <position position="55"/>
    </location>
    <ligand>
        <name>FAD</name>
        <dbReference type="ChEBI" id="CHEBI:57692"/>
        <note>ligand shared between neighboring subunits</note>
    </ligand>
</feature>
<feature type="binding site" evidence="1">
    <location>
        <begin position="76"/>
        <end position="79"/>
    </location>
    <ligand>
        <name>dUMP</name>
        <dbReference type="ChEBI" id="CHEBI:246422"/>
        <note>ligand shared between dimeric partners</note>
    </ligand>
</feature>
<feature type="binding site" evidence="1">
    <location>
        <begin position="79"/>
        <end position="81"/>
    </location>
    <ligand>
        <name>FAD</name>
        <dbReference type="ChEBI" id="CHEBI:57692"/>
        <note>ligand shared between neighboring subunits</note>
    </ligand>
</feature>
<feature type="binding site" description="in other chain" evidence="1">
    <location>
        <begin position="87"/>
        <end position="91"/>
    </location>
    <ligand>
        <name>dUMP</name>
        <dbReference type="ChEBI" id="CHEBI:246422"/>
        <note>ligand shared between dimeric partners</note>
    </ligand>
</feature>
<feature type="binding site" evidence="1">
    <location>
        <position position="87"/>
    </location>
    <ligand>
        <name>FAD</name>
        <dbReference type="ChEBI" id="CHEBI:57692"/>
        <note>ligand shared between neighboring subunits</note>
    </ligand>
</feature>
<feature type="binding site" description="in other chain" evidence="1">
    <location>
        <position position="141"/>
    </location>
    <ligand>
        <name>dUMP</name>
        <dbReference type="ChEBI" id="CHEBI:246422"/>
        <note>ligand shared between dimeric partners</note>
    </ligand>
</feature>
<feature type="binding site" evidence="1">
    <location>
        <begin position="157"/>
        <end position="159"/>
    </location>
    <ligand>
        <name>FAD</name>
        <dbReference type="ChEBI" id="CHEBI:57692"/>
        <note>ligand shared between neighboring subunits</note>
    </ligand>
</feature>
<feature type="binding site" evidence="1">
    <location>
        <position position="163"/>
    </location>
    <ligand>
        <name>FAD</name>
        <dbReference type="ChEBI" id="CHEBI:57692"/>
        <note>ligand shared between neighboring subunits</note>
    </ligand>
</feature>
<feature type="binding site" evidence="1">
    <location>
        <position position="168"/>
    </location>
    <ligand>
        <name>dUMP</name>
        <dbReference type="ChEBI" id="CHEBI:246422"/>
        <note>ligand shared between dimeric partners</note>
    </ligand>
</feature>
<protein>
    <recommendedName>
        <fullName evidence="1">Flavin-dependent thymidylate synthase</fullName>
        <shortName evidence="1">FDTS</shortName>
        <ecNumber evidence="1">2.1.1.148</ecNumber>
    </recommendedName>
    <alternativeName>
        <fullName evidence="1">FAD-dependent thymidylate synthase</fullName>
    </alternativeName>
    <alternativeName>
        <fullName evidence="1">Thymidylate synthase ThyX</fullName>
        <shortName evidence="1">TS</shortName>
        <shortName evidence="1">TSase</shortName>
    </alternativeName>
</protein>
<name>THYX_SULAC</name>